<reference key="1">
    <citation type="journal article" date="2012" name="BMC Genomics">
        <title>The venom-gland transcriptome of the eastern diamondback rattlesnake (Crotalus adamanteus).</title>
        <authorList>
            <person name="Rokyta D.R."/>
            <person name="Lemmon A.R."/>
            <person name="Margres M.J."/>
            <person name="Aronow K."/>
        </authorList>
    </citation>
    <scope>NUCLEOTIDE SEQUENCE [MRNA]</scope>
    <source>
        <tissue>Venom gland</tissue>
    </source>
</reference>
<reference key="2">
    <citation type="journal article" date="2014" name="J. Proteomics">
        <title>Linking the transcriptome and proteome to characterize the venom of the eastern diamondback rattlesnake (Crotalus adamanteus).</title>
        <authorList>
            <person name="Margres M.J."/>
            <person name="McGivern J.J."/>
            <person name="Wray K.P."/>
            <person name="Seavy M."/>
            <person name="Calvin K."/>
            <person name="Rokyta D.R."/>
        </authorList>
    </citation>
    <scope>IDENTIFICATION BY MASS SPECTROMETRY</scope>
    <source>
        <tissue>Venom</tissue>
    </source>
</reference>
<protein>
    <recommendedName>
        <fullName>Snake venom serine proteinase 9</fullName>
        <shortName>SVSP</shortName>
        <ecNumber>3.4.21.-</ecNumber>
    </recommendedName>
</protein>
<proteinExistence type="evidence at protein level"/>
<dbReference type="EC" id="3.4.21.-"/>
<dbReference type="EMBL" id="JU173738">
    <property type="protein sequence ID" value="AFJ49264.1"/>
    <property type="molecule type" value="mRNA"/>
</dbReference>
<dbReference type="SMR" id="J3RYA3"/>
<dbReference type="GO" id="GO:0005576">
    <property type="term" value="C:extracellular region"/>
    <property type="evidence" value="ECO:0007669"/>
    <property type="project" value="UniProtKB-SubCell"/>
</dbReference>
<dbReference type="GO" id="GO:0030141">
    <property type="term" value="C:secretory granule"/>
    <property type="evidence" value="ECO:0007669"/>
    <property type="project" value="TreeGrafter"/>
</dbReference>
<dbReference type="GO" id="GO:0004252">
    <property type="term" value="F:serine-type endopeptidase activity"/>
    <property type="evidence" value="ECO:0007669"/>
    <property type="project" value="InterPro"/>
</dbReference>
<dbReference type="GO" id="GO:0090729">
    <property type="term" value="F:toxin activity"/>
    <property type="evidence" value="ECO:0007669"/>
    <property type="project" value="UniProtKB-KW"/>
</dbReference>
<dbReference type="GO" id="GO:0006508">
    <property type="term" value="P:proteolysis"/>
    <property type="evidence" value="ECO:0007669"/>
    <property type="project" value="UniProtKB-KW"/>
</dbReference>
<dbReference type="CDD" id="cd00190">
    <property type="entry name" value="Tryp_SPc"/>
    <property type="match status" value="1"/>
</dbReference>
<dbReference type="FunFam" id="2.40.10.10:FF:000158">
    <property type="entry name" value="Thrombin-like enzyme saxthrombin"/>
    <property type="match status" value="1"/>
</dbReference>
<dbReference type="FunFam" id="2.40.10.10:FF:000153">
    <property type="entry name" value="Venom plasminogen activator TSV-PA"/>
    <property type="match status" value="1"/>
</dbReference>
<dbReference type="Gene3D" id="2.40.10.10">
    <property type="entry name" value="Trypsin-like serine proteases"/>
    <property type="match status" value="2"/>
</dbReference>
<dbReference type="InterPro" id="IPR009003">
    <property type="entry name" value="Peptidase_S1_PA"/>
</dbReference>
<dbReference type="InterPro" id="IPR043504">
    <property type="entry name" value="Peptidase_S1_PA_chymotrypsin"/>
</dbReference>
<dbReference type="InterPro" id="IPR001314">
    <property type="entry name" value="Peptidase_S1A"/>
</dbReference>
<dbReference type="InterPro" id="IPR001254">
    <property type="entry name" value="Trypsin_dom"/>
</dbReference>
<dbReference type="InterPro" id="IPR018114">
    <property type="entry name" value="TRYPSIN_HIS"/>
</dbReference>
<dbReference type="PANTHER" id="PTHR24271:SF47">
    <property type="entry name" value="KALLIKREIN-1"/>
    <property type="match status" value="1"/>
</dbReference>
<dbReference type="PANTHER" id="PTHR24271">
    <property type="entry name" value="KALLIKREIN-RELATED"/>
    <property type="match status" value="1"/>
</dbReference>
<dbReference type="Pfam" id="PF00089">
    <property type="entry name" value="Trypsin"/>
    <property type="match status" value="1"/>
</dbReference>
<dbReference type="PRINTS" id="PR00722">
    <property type="entry name" value="CHYMOTRYPSIN"/>
</dbReference>
<dbReference type="SMART" id="SM00020">
    <property type="entry name" value="Tryp_SPc"/>
    <property type="match status" value="1"/>
</dbReference>
<dbReference type="SUPFAM" id="SSF50494">
    <property type="entry name" value="Trypsin-like serine proteases"/>
    <property type="match status" value="1"/>
</dbReference>
<dbReference type="PROSITE" id="PS50240">
    <property type="entry name" value="TRYPSIN_DOM"/>
    <property type="match status" value="1"/>
</dbReference>
<dbReference type="PROSITE" id="PS00134">
    <property type="entry name" value="TRYPSIN_HIS"/>
    <property type="match status" value="1"/>
</dbReference>
<keyword id="KW-1015">Disulfide bond</keyword>
<keyword id="KW-0325">Glycoprotein</keyword>
<keyword id="KW-1199">Hemostasis impairing toxin</keyword>
<keyword id="KW-0378">Hydrolase</keyword>
<keyword id="KW-0645">Protease</keyword>
<keyword id="KW-0964">Secreted</keyword>
<keyword id="KW-0720">Serine protease</keyword>
<keyword id="KW-0732">Signal</keyword>
<keyword id="KW-0800">Toxin</keyword>
<keyword id="KW-0865">Zymogen</keyword>
<accession>J3RYA3</accession>
<feature type="signal peptide" evidence="2">
    <location>
        <begin position="1"/>
        <end position="18"/>
    </location>
</feature>
<feature type="propeptide" id="PRO_0000425641" evidence="1">
    <location>
        <begin position="19"/>
        <end position="24"/>
    </location>
</feature>
<feature type="chain" id="PRO_0000425642" description="Snake venom serine proteinase 9">
    <location>
        <begin position="25"/>
        <end position="262"/>
    </location>
</feature>
<feature type="domain" description="Peptidase S1" evidence="3">
    <location>
        <begin position="25"/>
        <end position="253"/>
    </location>
</feature>
<feature type="active site" description="Charge relay system" evidence="1">
    <location>
        <position position="67"/>
    </location>
</feature>
<feature type="active site" description="Charge relay system" evidence="1">
    <location>
        <position position="112"/>
    </location>
</feature>
<feature type="active site" description="Charge relay system" evidence="1">
    <location>
        <position position="208"/>
    </location>
</feature>
<feature type="glycosylation site" description="N-linked (GlcNAc...) asparagine" evidence="2">
    <location>
        <position position="105"/>
    </location>
</feature>
<feature type="disulfide bond" evidence="3">
    <location>
        <begin position="31"/>
        <end position="165"/>
    </location>
</feature>
<feature type="disulfide bond" evidence="3">
    <location>
        <begin position="52"/>
        <end position="68"/>
    </location>
</feature>
<feature type="disulfide bond" evidence="3">
    <location>
        <begin position="144"/>
        <end position="214"/>
    </location>
</feature>
<feature type="disulfide bond" evidence="3">
    <location>
        <begin position="176"/>
        <end position="193"/>
    </location>
</feature>
<feature type="disulfide bond" evidence="3">
    <location>
        <begin position="204"/>
        <end position="229"/>
    </location>
</feature>
<sequence>MVLIRVLANLLILQLSYAQKSSELVIGGDECNIDEHRFLVALYHSRSKTFLCGGTLLNEEWVLTAAHCNRVFMYIRLGMHNKNVKFDDEQIRYAKEKYFFRCHNNFTRWDKDIMLIRLNKPVSYSEHIAPLSLPFSPPSVGSVCRAMGWGQTTSPQETLPDVPHCANINLLDYEVCRTAHPQFRLPATSRTLCAGVLEGGIDTCNRDSGGPLICNGQFQGIVFWGPDPCAQPDKPGLYTKVFDHLDWIQSIIAGEKTVNCPP</sequence>
<name>VSP9_CROAD</name>
<organism>
    <name type="scientific">Crotalus adamanteus</name>
    <name type="common">Eastern diamondback rattlesnake</name>
    <dbReference type="NCBI Taxonomy" id="8729"/>
    <lineage>
        <taxon>Eukaryota</taxon>
        <taxon>Metazoa</taxon>
        <taxon>Chordata</taxon>
        <taxon>Craniata</taxon>
        <taxon>Vertebrata</taxon>
        <taxon>Euteleostomi</taxon>
        <taxon>Lepidosauria</taxon>
        <taxon>Squamata</taxon>
        <taxon>Bifurcata</taxon>
        <taxon>Unidentata</taxon>
        <taxon>Episquamata</taxon>
        <taxon>Toxicofera</taxon>
        <taxon>Serpentes</taxon>
        <taxon>Colubroidea</taxon>
        <taxon>Viperidae</taxon>
        <taxon>Crotalinae</taxon>
        <taxon>Crotalus</taxon>
    </lineage>
</organism>
<comment type="function">
    <text evidence="1">Snake venom serine protease that may act in the hemostasis system of the prey.</text>
</comment>
<comment type="subunit">
    <text evidence="1">Monomer.</text>
</comment>
<comment type="subcellular location">
    <subcellularLocation>
        <location>Secreted</location>
    </subcellularLocation>
</comment>
<comment type="tissue specificity">
    <text>Expressed by the venom gland.</text>
</comment>
<comment type="similarity">
    <text evidence="3">Belongs to the peptidase S1 family. Snake venom subfamily.</text>
</comment>
<evidence type="ECO:0000250" key="1"/>
<evidence type="ECO:0000255" key="2"/>
<evidence type="ECO:0000255" key="3">
    <source>
        <dbReference type="PROSITE-ProRule" id="PRU00274"/>
    </source>
</evidence>